<keyword id="KW-0028">Amino-acid biosynthesis</keyword>
<keyword id="KW-0100">Branched-chain amino acid biosynthesis</keyword>
<keyword id="KW-0460">Magnesium</keyword>
<keyword id="KW-0479">Metal-binding</keyword>
<keyword id="KW-0521">NADP</keyword>
<keyword id="KW-0560">Oxidoreductase</keyword>
<keyword id="KW-1185">Reference proteome</keyword>
<accession>Q2RX71</accession>
<reference key="1">
    <citation type="journal article" date="2011" name="Stand. Genomic Sci.">
        <title>Complete genome sequence of Rhodospirillum rubrum type strain (S1).</title>
        <authorList>
            <person name="Munk A.C."/>
            <person name="Copeland A."/>
            <person name="Lucas S."/>
            <person name="Lapidus A."/>
            <person name="Del Rio T.G."/>
            <person name="Barry K."/>
            <person name="Detter J.C."/>
            <person name="Hammon N."/>
            <person name="Israni S."/>
            <person name="Pitluck S."/>
            <person name="Brettin T."/>
            <person name="Bruce D."/>
            <person name="Han C."/>
            <person name="Tapia R."/>
            <person name="Gilna P."/>
            <person name="Schmutz J."/>
            <person name="Larimer F."/>
            <person name="Land M."/>
            <person name="Kyrpides N.C."/>
            <person name="Mavromatis K."/>
            <person name="Richardson P."/>
            <person name="Rohde M."/>
            <person name="Goeker M."/>
            <person name="Klenk H.P."/>
            <person name="Zhang Y."/>
            <person name="Roberts G.P."/>
            <person name="Reslewic S."/>
            <person name="Schwartz D.C."/>
        </authorList>
    </citation>
    <scope>NUCLEOTIDE SEQUENCE [LARGE SCALE GENOMIC DNA]</scope>
    <source>
        <strain>ATCC 11170 / ATH 1.1.1 / DSM 467 / LMG 4362 / NCIMB 8255 / S1</strain>
    </source>
</reference>
<proteinExistence type="inferred from homology"/>
<gene>
    <name evidence="1" type="primary">ilvC</name>
    <name type="ordered locus">Rru_A0469</name>
</gene>
<comment type="function">
    <text evidence="1">Involved in the biosynthesis of branched-chain amino acids (BCAA). Catalyzes an alkyl-migration followed by a ketol-acid reduction of (S)-2-acetolactate (S2AL) to yield (R)-2,3-dihydroxy-isovalerate. In the isomerase reaction, S2AL is rearranged via a Mg-dependent methyl migration to produce 3-hydroxy-3-methyl-2-ketobutyrate (HMKB). In the reductase reaction, this 2-ketoacid undergoes a metal-dependent reduction by NADPH to yield (R)-2,3-dihydroxy-isovalerate.</text>
</comment>
<comment type="catalytic activity">
    <reaction evidence="1">
        <text>(2R)-2,3-dihydroxy-3-methylbutanoate + NADP(+) = (2S)-2-acetolactate + NADPH + H(+)</text>
        <dbReference type="Rhea" id="RHEA:22068"/>
        <dbReference type="ChEBI" id="CHEBI:15378"/>
        <dbReference type="ChEBI" id="CHEBI:49072"/>
        <dbReference type="ChEBI" id="CHEBI:57783"/>
        <dbReference type="ChEBI" id="CHEBI:58349"/>
        <dbReference type="ChEBI" id="CHEBI:58476"/>
        <dbReference type="EC" id="1.1.1.86"/>
    </reaction>
</comment>
<comment type="catalytic activity">
    <reaction evidence="1">
        <text>(2R,3R)-2,3-dihydroxy-3-methylpentanoate + NADP(+) = (S)-2-ethyl-2-hydroxy-3-oxobutanoate + NADPH + H(+)</text>
        <dbReference type="Rhea" id="RHEA:13493"/>
        <dbReference type="ChEBI" id="CHEBI:15378"/>
        <dbReference type="ChEBI" id="CHEBI:49256"/>
        <dbReference type="ChEBI" id="CHEBI:49258"/>
        <dbReference type="ChEBI" id="CHEBI:57783"/>
        <dbReference type="ChEBI" id="CHEBI:58349"/>
        <dbReference type="EC" id="1.1.1.86"/>
    </reaction>
</comment>
<comment type="cofactor">
    <cofactor evidence="1">
        <name>Mg(2+)</name>
        <dbReference type="ChEBI" id="CHEBI:18420"/>
    </cofactor>
    <text evidence="1">Binds 2 magnesium ions per subunit.</text>
</comment>
<comment type="pathway">
    <text evidence="1">Amino-acid biosynthesis; L-isoleucine biosynthesis; L-isoleucine from 2-oxobutanoate: step 2/4.</text>
</comment>
<comment type="pathway">
    <text evidence="1">Amino-acid biosynthesis; L-valine biosynthesis; L-valine from pyruvate: step 2/4.</text>
</comment>
<comment type="similarity">
    <text evidence="1">Belongs to the ketol-acid reductoisomerase family.</text>
</comment>
<name>ILVC_RHORT</name>
<dbReference type="EC" id="1.1.1.86" evidence="1"/>
<dbReference type="EMBL" id="CP000230">
    <property type="protein sequence ID" value="ABC21274.1"/>
    <property type="molecule type" value="Genomic_DNA"/>
</dbReference>
<dbReference type="RefSeq" id="WP_011388228.1">
    <property type="nucleotide sequence ID" value="NC_007643.1"/>
</dbReference>
<dbReference type="RefSeq" id="YP_425561.1">
    <property type="nucleotide sequence ID" value="NC_007643.1"/>
</dbReference>
<dbReference type="SMR" id="Q2RX71"/>
<dbReference type="STRING" id="269796.Rru_A0469"/>
<dbReference type="EnsemblBacteria" id="ABC21274">
    <property type="protein sequence ID" value="ABC21274"/>
    <property type="gene ID" value="Rru_A0469"/>
</dbReference>
<dbReference type="KEGG" id="rru:Rru_A0469"/>
<dbReference type="PATRIC" id="fig|269796.9.peg.526"/>
<dbReference type="eggNOG" id="COG0059">
    <property type="taxonomic scope" value="Bacteria"/>
</dbReference>
<dbReference type="HOGENOM" id="CLU_033821_0_1_5"/>
<dbReference type="PhylomeDB" id="Q2RX71"/>
<dbReference type="UniPathway" id="UPA00047">
    <property type="reaction ID" value="UER00056"/>
</dbReference>
<dbReference type="UniPathway" id="UPA00049">
    <property type="reaction ID" value="UER00060"/>
</dbReference>
<dbReference type="Proteomes" id="UP000001929">
    <property type="component" value="Chromosome"/>
</dbReference>
<dbReference type="GO" id="GO:0005829">
    <property type="term" value="C:cytosol"/>
    <property type="evidence" value="ECO:0007669"/>
    <property type="project" value="TreeGrafter"/>
</dbReference>
<dbReference type="GO" id="GO:0004455">
    <property type="term" value="F:ketol-acid reductoisomerase activity"/>
    <property type="evidence" value="ECO:0007669"/>
    <property type="project" value="UniProtKB-UniRule"/>
</dbReference>
<dbReference type="GO" id="GO:0000287">
    <property type="term" value="F:magnesium ion binding"/>
    <property type="evidence" value="ECO:0007669"/>
    <property type="project" value="UniProtKB-UniRule"/>
</dbReference>
<dbReference type="GO" id="GO:0050661">
    <property type="term" value="F:NADP binding"/>
    <property type="evidence" value="ECO:0007669"/>
    <property type="project" value="InterPro"/>
</dbReference>
<dbReference type="GO" id="GO:0009097">
    <property type="term" value="P:isoleucine biosynthetic process"/>
    <property type="evidence" value="ECO:0007669"/>
    <property type="project" value="UniProtKB-UniRule"/>
</dbReference>
<dbReference type="GO" id="GO:0009099">
    <property type="term" value="P:L-valine biosynthetic process"/>
    <property type="evidence" value="ECO:0007669"/>
    <property type="project" value="UniProtKB-UniRule"/>
</dbReference>
<dbReference type="FunFam" id="3.40.50.720:FF:000023">
    <property type="entry name" value="Ketol-acid reductoisomerase (NADP(+))"/>
    <property type="match status" value="1"/>
</dbReference>
<dbReference type="Gene3D" id="6.10.240.10">
    <property type="match status" value="1"/>
</dbReference>
<dbReference type="Gene3D" id="3.40.50.720">
    <property type="entry name" value="NAD(P)-binding Rossmann-like Domain"/>
    <property type="match status" value="1"/>
</dbReference>
<dbReference type="HAMAP" id="MF_00435">
    <property type="entry name" value="IlvC"/>
    <property type="match status" value="1"/>
</dbReference>
<dbReference type="InterPro" id="IPR008927">
    <property type="entry name" value="6-PGluconate_DH-like_C_sf"/>
</dbReference>
<dbReference type="InterPro" id="IPR013023">
    <property type="entry name" value="KARI"/>
</dbReference>
<dbReference type="InterPro" id="IPR000506">
    <property type="entry name" value="KARI_C"/>
</dbReference>
<dbReference type="InterPro" id="IPR013116">
    <property type="entry name" value="KARI_N"/>
</dbReference>
<dbReference type="InterPro" id="IPR014359">
    <property type="entry name" value="KARI_prok"/>
</dbReference>
<dbReference type="InterPro" id="IPR036291">
    <property type="entry name" value="NAD(P)-bd_dom_sf"/>
</dbReference>
<dbReference type="NCBIfam" id="TIGR00465">
    <property type="entry name" value="ilvC"/>
    <property type="match status" value="1"/>
</dbReference>
<dbReference type="NCBIfam" id="NF004017">
    <property type="entry name" value="PRK05479.1"/>
    <property type="match status" value="1"/>
</dbReference>
<dbReference type="NCBIfam" id="NF009940">
    <property type="entry name" value="PRK13403.1"/>
    <property type="match status" value="1"/>
</dbReference>
<dbReference type="PANTHER" id="PTHR21371">
    <property type="entry name" value="KETOL-ACID REDUCTOISOMERASE, MITOCHONDRIAL"/>
    <property type="match status" value="1"/>
</dbReference>
<dbReference type="PANTHER" id="PTHR21371:SF1">
    <property type="entry name" value="KETOL-ACID REDUCTOISOMERASE, MITOCHONDRIAL"/>
    <property type="match status" value="1"/>
</dbReference>
<dbReference type="Pfam" id="PF01450">
    <property type="entry name" value="KARI_C"/>
    <property type="match status" value="1"/>
</dbReference>
<dbReference type="Pfam" id="PF07991">
    <property type="entry name" value="KARI_N"/>
    <property type="match status" value="1"/>
</dbReference>
<dbReference type="PIRSF" id="PIRSF000116">
    <property type="entry name" value="IlvC_gammaproteo"/>
    <property type="match status" value="1"/>
</dbReference>
<dbReference type="SUPFAM" id="SSF48179">
    <property type="entry name" value="6-phosphogluconate dehydrogenase C-terminal domain-like"/>
    <property type="match status" value="1"/>
</dbReference>
<dbReference type="SUPFAM" id="SSF51735">
    <property type="entry name" value="NAD(P)-binding Rossmann-fold domains"/>
    <property type="match status" value="1"/>
</dbReference>
<dbReference type="PROSITE" id="PS51851">
    <property type="entry name" value="KARI_C"/>
    <property type="match status" value="1"/>
</dbReference>
<dbReference type="PROSITE" id="PS51850">
    <property type="entry name" value="KARI_N"/>
    <property type="match status" value="1"/>
</dbReference>
<evidence type="ECO:0000255" key="1">
    <source>
        <dbReference type="HAMAP-Rule" id="MF_00435"/>
    </source>
</evidence>
<evidence type="ECO:0000255" key="2">
    <source>
        <dbReference type="PROSITE-ProRule" id="PRU01197"/>
    </source>
</evidence>
<evidence type="ECO:0000255" key="3">
    <source>
        <dbReference type="PROSITE-ProRule" id="PRU01198"/>
    </source>
</evidence>
<sequence length="339" mass="36965">MRVYYDRDADVNLIKGKKVAVVGYGSQGHAHVLNLRDSGVTEVCVALREGSPSAKKATGQGLVVKTPAEAAAWADVVMILTPDELQGDLYKDHLHANMKQGAALAFAHGLNIHFALIEPRPDLDVFMIAPKGPGHTVRSEYVRGGGVPCLVAVAQDASGNAMEIALSYASAIGGGRSGIIETTFREECETDLFGEQAVLCGGLTELIKNGFETLVEAGYAPEMAYFECLHEVKLIVDLMYEGGMANMRYSISNTAEYGDYVTGPRIVTPETKAEMKRVLDDIQSGRFVRDWMIECKAGQPSFKATRRRNAEHQIEEVGGRLRAMMPWIAANRLVDKDKN</sequence>
<feature type="chain" id="PRO_0000252782" description="Ketol-acid reductoisomerase (NADP(+))">
    <location>
        <begin position="1"/>
        <end position="339"/>
    </location>
</feature>
<feature type="domain" description="KARI N-terminal Rossmann" evidence="2">
    <location>
        <begin position="1"/>
        <end position="182"/>
    </location>
</feature>
<feature type="domain" description="KARI C-terminal knotted" evidence="3">
    <location>
        <begin position="183"/>
        <end position="328"/>
    </location>
</feature>
<feature type="active site" evidence="1">
    <location>
        <position position="108"/>
    </location>
</feature>
<feature type="binding site" evidence="1">
    <location>
        <begin position="24"/>
        <end position="27"/>
    </location>
    <ligand>
        <name>NADP(+)</name>
        <dbReference type="ChEBI" id="CHEBI:58349"/>
    </ligand>
</feature>
<feature type="binding site" evidence="1">
    <location>
        <position position="48"/>
    </location>
    <ligand>
        <name>NADP(+)</name>
        <dbReference type="ChEBI" id="CHEBI:58349"/>
    </ligand>
</feature>
<feature type="binding site" evidence="1">
    <location>
        <position position="51"/>
    </location>
    <ligand>
        <name>NADP(+)</name>
        <dbReference type="ChEBI" id="CHEBI:58349"/>
    </ligand>
</feature>
<feature type="binding site" evidence="1">
    <location>
        <position position="53"/>
    </location>
    <ligand>
        <name>NADP(+)</name>
        <dbReference type="ChEBI" id="CHEBI:58349"/>
    </ligand>
</feature>
<feature type="binding site" evidence="1">
    <location>
        <begin position="83"/>
        <end position="86"/>
    </location>
    <ligand>
        <name>NADP(+)</name>
        <dbReference type="ChEBI" id="CHEBI:58349"/>
    </ligand>
</feature>
<feature type="binding site" evidence="1">
    <location>
        <position position="134"/>
    </location>
    <ligand>
        <name>NADP(+)</name>
        <dbReference type="ChEBI" id="CHEBI:58349"/>
    </ligand>
</feature>
<feature type="binding site" evidence="1">
    <location>
        <position position="191"/>
    </location>
    <ligand>
        <name>Mg(2+)</name>
        <dbReference type="ChEBI" id="CHEBI:18420"/>
        <label>1</label>
    </ligand>
</feature>
<feature type="binding site" evidence="1">
    <location>
        <position position="191"/>
    </location>
    <ligand>
        <name>Mg(2+)</name>
        <dbReference type="ChEBI" id="CHEBI:18420"/>
        <label>2</label>
    </ligand>
</feature>
<feature type="binding site" evidence="1">
    <location>
        <position position="195"/>
    </location>
    <ligand>
        <name>Mg(2+)</name>
        <dbReference type="ChEBI" id="CHEBI:18420"/>
        <label>1</label>
    </ligand>
</feature>
<feature type="binding site" evidence="1">
    <location>
        <position position="227"/>
    </location>
    <ligand>
        <name>Mg(2+)</name>
        <dbReference type="ChEBI" id="CHEBI:18420"/>
        <label>2</label>
    </ligand>
</feature>
<feature type="binding site" evidence="1">
    <location>
        <position position="231"/>
    </location>
    <ligand>
        <name>Mg(2+)</name>
        <dbReference type="ChEBI" id="CHEBI:18420"/>
        <label>2</label>
    </ligand>
</feature>
<feature type="binding site" evidence="1">
    <location>
        <position position="252"/>
    </location>
    <ligand>
        <name>substrate</name>
    </ligand>
</feature>
<organism>
    <name type="scientific">Rhodospirillum rubrum (strain ATCC 11170 / ATH 1.1.1 / DSM 467 / LMG 4362 / NCIMB 8255 / S1)</name>
    <dbReference type="NCBI Taxonomy" id="269796"/>
    <lineage>
        <taxon>Bacteria</taxon>
        <taxon>Pseudomonadati</taxon>
        <taxon>Pseudomonadota</taxon>
        <taxon>Alphaproteobacteria</taxon>
        <taxon>Rhodospirillales</taxon>
        <taxon>Rhodospirillaceae</taxon>
        <taxon>Rhodospirillum</taxon>
    </lineage>
</organism>
<protein>
    <recommendedName>
        <fullName evidence="1">Ketol-acid reductoisomerase (NADP(+))</fullName>
        <shortName evidence="1">KARI</shortName>
        <ecNumber evidence="1">1.1.1.86</ecNumber>
    </recommendedName>
    <alternativeName>
        <fullName evidence="1">Acetohydroxy-acid isomeroreductase</fullName>
        <shortName evidence="1">AHIR</shortName>
    </alternativeName>
    <alternativeName>
        <fullName evidence="1">Alpha-keto-beta-hydroxylacyl reductoisomerase</fullName>
    </alternativeName>
    <alternativeName>
        <fullName evidence="1">Ketol-acid reductoisomerase type 1</fullName>
    </alternativeName>
    <alternativeName>
        <fullName evidence="1">Ketol-acid reductoisomerase type I</fullName>
    </alternativeName>
</protein>